<accession>B7UXX6</accession>
<name>SYP_PSEA8</name>
<organism>
    <name type="scientific">Pseudomonas aeruginosa (strain LESB58)</name>
    <dbReference type="NCBI Taxonomy" id="557722"/>
    <lineage>
        <taxon>Bacteria</taxon>
        <taxon>Pseudomonadati</taxon>
        <taxon>Pseudomonadota</taxon>
        <taxon>Gammaproteobacteria</taxon>
        <taxon>Pseudomonadales</taxon>
        <taxon>Pseudomonadaceae</taxon>
        <taxon>Pseudomonas</taxon>
    </lineage>
</organism>
<reference key="1">
    <citation type="journal article" date="2009" name="Genome Res.">
        <title>Newly introduced genomic prophage islands are critical determinants of in vivo competitiveness in the Liverpool epidemic strain of Pseudomonas aeruginosa.</title>
        <authorList>
            <person name="Winstanley C."/>
            <person name="Langille M.G.I."/>
            <person name="Fothergill J.L."/>
            <person name="Kukavica-Ibrulj I."/>
            <person name="Paradis-Bleau C."/>
            <person name="Sanschagrin F."/>
            <person name="Thomson N.R."/>
            <person name="Winsor G.L."/>
            <person name="Quail M.A."/>
            <person name="Lennard N."/>
            <person name="Bignell A."/>
            <person name="Clarke L."/>
            <person name="Seeger K."/>
            <person name="Saunders D."/>
            <person name="Harris D."/>
            <person name="Parkhill J."/>
            <person name="Hancock R.E.W."/>
            <person name="Brinkman F.S.L."/>
            <person name="Levesque R.C."/>
        </authorList>
    </citation>
    <scope>NUCLEOTIDE SEQUENCE [LARGE SCALE GENOMIC DNA]</scope>
    <source>
        <strain>LESB58</strain>
    </source>
</reference>
<dbReference type="EC" id="6.1.1.15" evidence="1"/>
<dbReference type="EMBL" id="FM209186">
    <property type="protein sequence ID" value="CAW29113.1"/>
    <property type="molecule type" value="Genomic_DNA"/>
</dbReference>
<dbReference type="RefSeq" id="WP_003102377.1">
    <property type="nucleotide sequence ID" value="NC_011770.1"/>
</dbReference>
<dbReference type="SMR" id="B7UXX6"/>
<dbReference type="KEGG" id="pag:PLES_43581"/>
<dbReference type="HOGENOM" id="CLU_016739_0_0_6"/>
<dbReference type="GO" id="GO:0005829">
    <property type="term" value="C:cytosol"/>
    <property type="evidence" value="ECO:0007669"/>
    <property type="project" value="TreeGrafter"/>
</dbReference>
<dbReference type="GO" id="GO:0002161">
    <property type="term" value="F:aminoacyl-tRNA deacylase activity"/>
    <property type="evidence" value="ECO:0007669"/>
    <property type="project" value="InterPro"/>
</dbReference>
<dbReference type="GO" id="GO:0005524">
    <property type="term" value="F:ATP binding"/>
    <property type="evidence" value="ECO:0007669"/>
    <property type="project" value="UniProtKB-UniRule"/>
</dbReference>
<dbReference type="GO" id="GO:0004827">
    <property type="term" value="F:proline-tRNA ligase activity"/>
    <property type="evidence" value="ECO:0007669"/>
    <property type="project" value="UniProtKB-UniRule"/>
</dbReference>
<dbReference type="GO" id="GO:0006433">
    <property type="term" value="P:prolyl-tRNA aminoacylation"/>
    <property type="evidence" value="ECO:0007669"/>
    <property type="project" value="UniProtKB-UniRule"/>
</dbReference>
<dbReference type="CDD" id="cd04334">
    <property type="entry name" value="ProRS-INS"/>
    <property type="match status" value="1"/>
</dbReference>
<dbReference type="CDD" id="cd00861">
    <property type="entry name" value="ProRS_anticodon_short"/>
    <property type="match status" value="1"/>
</dbReference>
<dbReference type="CDD" id="cd00779">
    <property type="entry name" value="ProRS_core_prok"/>
    <property type="match status" value="1"/>
</dbReference>
<dbReference type="FunFam" id="3.30.930.10:FF:000012">
    <property type="entry name" value="Proline--tRNA ligase"/>
    <property type="match status" value="1"/>
</dbReference>
<dbReference type="FunFam" id="3.30.930.10:FF:000097">
    <property type="entry name" value="Proline--tRNA ligase"/>
    <property type="match status" value="1"/>
</dbReference>
<dbReference type="FunFam" id="3.40.50.800:FF:000006">
    <property type="entry name" value="Proline--tRNA ligase"/>
    <property type="match status" value="1"/>
</dbReference>
<dbReference type="FunFam" id="3.90.960.10:FF:000001">
    <property type="entry name" value="Proline--tRNA ligase"/>
    <property type="match status" value="1"/>
</dbReference>
<dbReference type="Gene3D" id="3.40.50.800">
    <property type="entry name" value="Anticodon-binding domain"/>
    <property type="match status" value="1"/>
</dbReference>
<dbReference type="Gene3D" id="3.30.930.10">
    <property type="entry name" value="Bira Bifunctional Protein, Domain 2"/>
    <property type="match status" value="2"/>
</dbReference>
<dbReference type="Gene3D" id="3.90.960.10">
    <property type="entry name" value="YbaK/aminoacyl-tRNA synthetase-associated domain"/>
    <property type="match status" value="1"/>
</dbReference>
<dbReference type="HAMAP" id="MF_01569">
    <property type="entry name" value="Pro_tRNA_synth_type1"/>
    <property type="match status" value="1"/>
</dbReference>
<dbReference type="InterPro" id="IPR002314">
    <property type="entry name" value="aa-tRNA-synt_IIb"/>
</dbReference>
<dbReference type="InterPro" id="IPR006195">
    <property type="entry name" value="aa-tRNA-synth_II"/>
</dbReference>
<dbReference type="InterPro" id="IPR045864">
    <property type="entry name" value="aa-tRNA-synth_II/BPL/LPL"/>
</dbReference>
<dbReference type="InterPro" id="IPR004154">
    <property type="entry name" value="Anticodon-bd"/>
</dbReference>
<dbReference type="InterPro" id="IPR036621">
    <property type="entry name" value="Anticodon-bd_dom_sf"/>
</dbReference>
<dbReference type="InterPro" id="IPR002316">
    <property type="entry name" value="Pro-tRNA-ligase_IIa"/>
</dbReference>
<dbReference type="InterPro" id="IPR004500">
    <property type="entry name" value="Pro-tRNA-synth_IIa_bac-type"/>
</dbReference>
<dbReference type="InterPro" id="IPR023717">
    <property type="entry name" value="Pro-tRNA-Synthase_IIa_type1"/>
</dbReference>
<dbReference type="InterPro" id="IPR050062">
    <property type="entry name" value="Pro-tRNA_synthetase"/>
</dbReference>
<dbReference type="InterPro" id="IPR044140">
    <property type="entry name" value="ProRS_anticodon_short"/>
</dbReference>
<dbReference type="InterPro" id="IPR033730">
    <property type="entry name" value="ProRS_core_prok"/>
</dbReference>
<dbReference type="InterPro" id="IPR036754">
    <property type="entry name" value="YbaK/aa-tRNA-synt-asso_dom_sf"/>
</dbReference>
<dbReference type="InterPro" id="IPR007214">
    <property type="entry name" value="YbaK/aa-tRNA-synth-assoc-dom"/>
</dbReference>
<dbReference type="NCBIfam" id="NF006625">
    <property type="entry name" value="PRK09194.1"/>
    <property type="match status" value="1"/>
</dbReference>
<dbReference type="NCBIfam" id="TIGR00409">
    <property type="entry name" value="proS_fam_II"/>
    <property type="match status" value="1"/>
</dbReference>
<dbReference type="PANTHER" id="PTHR42753">
    <property type="entry name" value="MITOCHONDRIAL RIBOSOME PROTEIN L39/PROLYL-TRNA LIGASE FAMILY MEMBER"/>
    <property type="match status" value="1"/>
</dbReference>
<dbReference type="PANTHER" id="PTHR42753:SF2">
    <property type="entry name" value="PROLINE--TRNA LIGASE"/>
    <property type="match status" value="1"/>
</dbReference>
<dbReference type="Pfam" id="PF03129">
    <property type="entry name" value="HGTP_anticodon"/>
    <property type="match status" value="1"/>
</dbReference>
<dbReference type="Pfam" id="PF00587">
    <property type="entry name" value="tRNA-synt_2b"/>
    <property type="match status" value="1"/>
</dbReference>
<dbReference type="Pfam" id="PF04073">
    <property type="entry name" value="tRNA_edit"/>
    <property type="match status" value="1"/>
</dbReference>
<dbReference type="PIRSF" id="PIRSF001535">
    <property type="entry name" value="ProRS_1"/>
    <property type="match status" value="1"/>
</dbReference>
<dbReference type="PRINTS" id="PR01046">
    <property type="entry name" value="TRNASYNTHPRO"/>
</dbReference>
<dbReference type="SUPFAM" id="SSF52954">
    <property type="entry name" value="Class II aaRS ABD-related"/>
    <property type="match status" value="1"/>
</dbReference>
<dbReference type="SUPFAM" id="SSF55681">
    <property type="entry name" value="Class II aaRS and biotin synthetases"/>
    <property type="match status" value="1"/>
</dbReference>
<dbReference type="SUPFAM" id="SSF55826">
    <property type="entry name" value="YbaK/ProRS associated domain"/>
    <property type="match status" value="1"/>
</dbReference>
<dbReference type="PROSITE" id="PS50862">
    <property type="entry name" value="AA_TRNA_LIGASE_II"/>
    <property type="match status" value="1"/>
</dbReference>
<gene>
    <name evidence="1" type="primary">proS</name>
    <name type="ordered locus">PLES_43581</name>
</gene>
<protein>
    <recommendedName>
        <fullName evidence="1">Proline--tRNA ligase</fullName>
        <ecNumber evidence="1">6.1.1.15</ecNumber>
    </recommendedName>
    <alternativeName>
        <fullName evidence="1">Prolyl-tRNA synthetase</fullName>
        <shortName evidence="1">ProRS</shortName>
    </alternativeName>
</protein>
<feature type="chain" id="PRO_1000199411" description="Proline--tRNA ligase">
    <location>
        <begin position="1"/>
        <end position="571"/>
    </location>
</feature>
<sequence>MRTSQYLLSTLKETPADAVVISHQLLLRAGMIRRLASGLYTWLPMGLRVLRKVETIVREEMNAAGALEVLMPAVQPAELWQESGRWEQYGPELLRLKDRHEREFCVGPTHEEVITDLARNELNSYKQLPINFYQIQTKFRDEIRPRFGLMRGREFIMKDAYSFHLSQDSLQQTYDGMYQAYSKIFSRLGLDFRPVQADNGSIGGSGSHEFHVLANSGEDDIVFSDSSDYAANIEKAEAVPRESARGSATEDMRLVDTPNTKTIAALVDGFQLPIEKTIKTLVVHGAEEGTLVALIVRGDHELNEIKAANQPLVASPLVFASEAEIRAAIGAGPGSLGPVNLPIACIVDRSVALMSDFAAGANIEDKHYFGVNWERDLPLPEVADLRNVVEGDPSPDGKGTLVIKRGIEVGHIFQLGTKYSEAMKLSVLSEQGKPVNLIMGCYGIGVSRVVAAAIEQNHDERGILWPSALAPFQIALVPLKYETESVKQATDKLYAELTAAGFEVLLDDRDKKTSPGVKFADMELIGIPHRIVISDRGLSEGVLEYKGRRDSESQNLPIGELMSFITEKLSR</sequence>
<proteinExistence type="inferred from homology"/>
<evidence type="ECO:0000255" key="1">
    <source>
        <dbReference type="HAMAP-Rule" id="MF_01569"/>
    </source>
</evidence>
<comment type="function">
    <text evidence="1">Catalyzes the attachment of proline to tRNA(Pro) in a two-step reaction: proline is first activated by ATP to form Pro-AMP and then transferred to the acceptor end of tRNA(Pro). As ProRS can inadvertently accommodate and process non-cognate amino acids such as alanine and cysteine, to avoid such errors it has two additional distinct editing activities against alanine. One activity is designated as 'pretransfer' editing and involves the tRNA(Pro)-independent hydrolysis of activated Ala-AMP. The other activity is designated 'posttransfer' editing and involves deacylation of mischarged Ala-tRNA(Pro). The misacylated Cys-tRNA(Pro) is not edited by ProRS.</text>
</comment>
<comment type="catalytic activity">
    <reaction evidence="1">
        <text>tRNA(Pro) + L-proline + ATP = L-prolyl-tRNA(Pro) + AMP + diphosphate</text>
        <dbReference type="Rhea" id="RHEA:14305"/>
        <dbReference type="Rhea" id="RHEA-COMP:9700"/>
        <dbReference type="Rhea" id="RHEA-COMP:9702"/>
        <dbReference type="ChEBI" id="CHEBI:30616"/>
        <dbReference type="ChEBI" id="CHEBI:33019"/>
        <dbReference type="ChEBI" id="CHEBI:60039"/>
        <dbReference type="ChEBI" id="CHEBI:78442"/>
        <dbReference type="ChEBI" id="CHEBI:78532"/>
        <dbReference type="ChEBI" id="CHEBI:456215"/>
        <dbReference type="EC" id="6.1.1.15"/>
    </reaction>
</comment>
<comment type="subunit">
    <text evidence="1">Homodimer.</text>
</comment>
<comment type="subcellular location">
    <subcellularLocation>
        <location evidence="1">Cytoplasm</location>
    </subcellularLocation>
</comment>
<comment type="domain">
    <text evidence="1">Consists of three domains: the N-terminal catalytic domain, the editing domain and the C-terminal anticodon-binding domain.</text>
</comment>
<comment type="similarity">
    <text evidence="1">Belongs to the class-II aminoacyl-tRNA synthetase family. ProS type 1 subfamily.</text>
</comment>
<keyword id="KW-0030">Aminoacyl-tRNA synthetase</keyword>
<keyword id="KW-0067">ATP-binding</keyword>
<keyword id="KW-0963">Cytoplasm</keyword>
<keyword id="KW-0436">Ligase</keyword>
<keyword id="KW-0547">Nucleotide-binding</keyword>
<keyword id="KW-0648">Protein biosynthesis</keyword>